<proteinExistence type="inferred from homology"/>
<accession>Q9ABI2</accession>
<comment type="catalytic activity">
    <reaction>
        <text>(4aS,6R)-4a-hydroxy-L-erythro-5,6,7,8-tetrahydrobiopterin = (6R)-L-erythro-6,7-dihydrobiopterin + H2O</text>
        <dbReference type="Rhea" id="RHEA:11920"/>
        <dbReference type="ChEBI" id="CHEBI:15377"/>
        <dbReference type="ChEBI" id="CHEBI:15642"/>
        <dbReference type="ChEBI" id="CHEBI:43120"/>
        <dbReference type="EC" id="4.2.1.96"/>
    </reaction>
</comment>
<comment type="similarity">
    <text evidence="1">Belongs to the pterin-4-alpha-carbinolamine dehydratase family.</text>
</comment>
<protein>
    <recommendedName>
        <fullName>Putative pterin-4-alpha-carbinolamine dehydratase</fullName>
        <shortName>PHS</shortName>
        <ecNumber>4.2.1.96</ecNumber>
    </recommendedName>
    <alternativeName>
        <fullName>4-alpha-hydroxy-tetrahydropterin dehydratase</fullName>
    </alternativeName>
    <alternativeName>
        <fullName>Pterin carbinolamine dehydratase</fullName>
        <shortName>PCD</shortName>
    </alternativeName>
</protein>
<name>PHS_CAUVC</name>
<gene>
    <name type="ordered locus">CC_0245</name>
</gene>
<feature type="chain" id="PRO_0000063078" description="Putative pterin-4-alpha-carbinolamine dehydratase">
    <location>
        <begin position="1"/>
        <end position="94"/>
    </location>
</feature>
<evidence type="ECO:0000305" key="1"/>
<organism>
    <name type="scientific">Caulobacter vibrioides (strain ATCC 19089 / CIP 103742 / CB 15)</name>
    <name type="common">Caulobacter crescentus</name>
    <dbReference type="NCBI Taxonomy" id="190650"/>
    <lineage>
        <taxon>Bacteria</taxon>
        <taxon>Pseudomonadati</taxon>
        <taxon>Pseudomonadota</taxon>
        <taxon>Alphaproteobacteria</taxon>
        <taxon>Caulobacterales</taxon>
        <taxon>Caulobacteraceae</taxon>
        <taxon>Caulobacter</taxon>
    </lineage>
</organism>
<dbReference type="EC" id="4.2.1.96"/>
<dbReference type="EMBL" id="AE005673">
    <property type="protein sequence ID" value="AAK22232.1"/>
    <property type="molecule type" value="Genomic_DNA"/>
</dbReference>
<dbReference type="PIR" id="D87279">
    <property type="entry name" value="D87279"/>
</dbReference>
<dbReference type="RefSeq" id="NP_419064.1">
    <property type="nucleotide sequence ID" value="NC_002696.2"/>
</dbReference>
<dbReference type="RefSeq" id="WP_010918134.1">
    <property type="nucleotide sequence ID" value="NC_002696.2"/>
</dbReference>
<dbReference type="SMR" id="Q9ABI2"/>
<dbReference type="STRING" id="190650.CC_0245"/>
<dbReference type="EnsemblBacteria" id="AAK22232">
    <property type="protein sequence ID" value="AAK22232"/>
    <property type="gene ID" value="CC_0245"/>
</dbReference>
<dbReference type="KEGG" id="ccr:CC_0245"/>
<dbReference type="PATRIC" id="fig|190650.5.peg.239"/>
<dbReference type="eggNOG" id="COG2154">
    <property type="taxonomic scope" value="Bacteria"/>
</dbReference>
<dbReference type="HOGENOM" id="CLU_081974_3_2_5"/>
<dbReference type="BioCyc" id="CAULO:CC0245-MONOMER"/>
<dbReference type="Proteomes" id="UP000001816">
    <property type="component" value="Chromosome"/>
</dbReference>
<dbReference type="GO" id="GO:0008124">
    <property type="term" value="F:4-alpha-hydroxytetrahydrobiopterin dehydratase activity"/>
    <property type="evidence" value="ECO:0007669"/>
    <property type="project" value="UniProtKB-UniRule"/>
</dbReference>
<dbReference type="GO" id="GO:0006729">
    <property type="term" value="P:tetrahydrobiopterin biosynthetic process"/>
    <property type="evidence" value="ECO:0007669"/>
    <property type="project" value="InterPro"/>
</dbReference>
<dbReference type="CDD" id="cd00914">
    <property type="entry name" value="PCD_DCoH_subfamily_b"/>
    <property type="match status" value="1"/>
</dbReference>
<dbReference type="Gene3D" id="3.30.1360.20">
    <property type="entry name" value="Transcriptional coactivator/pterin dehydratase"/>
    <property type="match status" value="1"/>
</dbReference>
<dbReference type="HAMAP" id="MF_00434">
    <property type="entry name" value="Pterin_4_alpha"/>
    <property type="match status" value="1"/>
</dbReference>
<dbReference type="InterPro" id="IPR036428">
    <property type="entry name" value="PCD_sf"/>
</dbReference>
<dbReference type="InterPro" id="IPR001533">
    <property type="entry name" value="Pterin_deHydtase"/>
</dbReference>
<dbReference type="NCBIfam" id="NF002018">
    <property type="entry name" value="PRK00823.1-3"/>
    <property type="match status" value="1"/>
</dbReference>
<dbReference type="PANTHER" id="PTHR12599">
    <property type="entry name" value="PTERIN-4-ALPHA-CARBINOLAMINE DEHYDRATASE"/>
    <property type="match status" value="1"/>
</dbReference>
<dbReference type="PANTHER" id="PTHR12599:SF0">
    <property type="entry name" value="PTERIN-4-ALPHA-CARBINOLAMINE DEHYDRATASE"/>
    <property type="match status" value="1"/>
</dbReference>
<dbReference type="Pfam" id="PF01329">
    <property type="entry name" value="Pterin_4a"/>
    <property type="match status" value="1"/>
</dbReference>
<dbReference type="SUPFAM" id="SSF55248">
    <property type="entry name" value="PCD-like"/>
    <property type="match status" value="1"/>
</dbReference>
<reference key="1">
    <citation type="journal article" date="2001" name="Proc. Natl. Acad. Sci. U.S.A.">
        <title>Complete genome sequence of Caulobacter crescentus.</title>
        <authorList>
            <person name="Nierman W.C."/>
            <person name="Feldblyum T.V."/>
            <person name="Laub M.T."/>
            <person name="Paulsen I.T."/>
            <person name="Nelson K.E."/>
            <person name="Eisen J.A."/>
            <person name="Heidelberg J.F."/>
            <person name="Alley M.R.K."/>
            <person name="Ohta N."/>
            <person name="Maddock J.R."/>
            <person name="Potocka I."/>
            <person name="Nelson W.C."/>
            <person name="Newton A."/>
            <person name="Stephens C."/>
            <person name="Phadke N.D."/>
            <person name="Ely B."/>
            <person name="DeBoy R.T."/>
            <person name="Dodson R.J."/>
            <person name="Durkin A.S."/>
            <person name="Gwinn M.L."/>
            <person name="Haft D.H."/>
            <person name="Kolonay J.F."/>
            <person name="Smit J."/>
            <person name="Craven M.B."/>
            <person name="Khouri H.M."/>
            <person name="Shetty J."/>
            <person name="Berry K.J."/>
            <person name="Utterback T.R."/>
            <person name="Tran K."/>
            <person name="Wolf A.M."/>
            <person name="Vamathevan J.J."/>
            <person name="Ermolaeva M.D."/>
            <person name="White O."/>
            <person name="Salzberg S.L."/>
            <person name="Venter J.C."/>
            <person name="Shapiro L."/>
            <person name="Fraser C.M."/>
        </authorList>
    </citation>
    <scope>NUCLEOTIDE SEQUENCE [LARGE SCALE GENOMIC DNA]</scope>
    <source>
        <strain>ATCC 19089 / CIP 103742 / CB 15</strain>
    </source>
</reference>
<sequence>MSRPRIGAAAAITQLEGWAIAPNHKDAIVKTFRFDDFNQAFGFMTRVALMADKLDHHPEWFNVYNRVEVLLTTHDADGVTDLDLTLAKFMDSAA</sequence>
<keyword id="KW-0456">Lyase</keyword>
<keyword id="KW-1185">Reference proteome</keyword>